<sequence>MKAKELREKSVEELNTELLNLLREQFNLRMQAASGQLQQSHLLKQVRRDVARVKTLLNEKAGA</sequence>
<proteinExistence type="inferred from homology"/>
<feature type="chain" id="PRO_1000079885" description="Large ribosomal subunit protein uL29">
    <location>
        <begin position="1"/>
        <end position="63"/>
    </location>
</feature>
<keyword id="KW-0687">Ribonucleoprotein</keyword>
<keyword id="KW-0689">Ribosomal protein</keyword>
<organism>
    <name type="scientific">Escherichia coli (strain ATCC 8739 / DSM 1576 / NBRC 3972 / NCIMB 8545 / WDCM 00012 / Crooks)</name>
    <dbReference type="NCBI Taxonomy" id="481805"/>
    <lineage>
        <taxon>Bacteria</taxon>
        <taxon>Pseudomonadati</taxon>
        <taxon>Pseudomonadota</taxon>
        <taxon>Gammaproteobacteria</taxon>
        <taxon>Enterobacterales</taxon>
        <taxon>Enterobacteriaceae</taxon>
        <taxon>Escherichia</taxon>
    </lineage>
</organism>
<protein>
    <recommendedName>
        <fullName evidence="1">Large ribosomal subunit protein uL29</fullName>
    </recommendedName>
    <alternativeName>
        <fullName evidence="2">50S ribosomal protein L29</fullName>
    </alternativeName>
</protein>
<accession>B1IPY7</accession>
<gene>
    <name evidence="1" type="primary">rpmC</name>
    <name type="ordered locus">EcolC_0401</name>
</gene>
<comment type="similarity">
    <text evidence="1">Belongs to the universal ribosomal protein uL29 family.</text>
</comment>
<reference key="1">
    <citation type="submission" date="2008-02" db="EMBL/GenBank/DDBJ databases">
        <title>Complete sequence of Escherichia coli C str. ATCC 8739.</title>
        <authorList>
            <person name="Copeland A."/>
            <person name="Lucas S."/>
            <person name="Lapidus A."/>
            <person name="Glavina del Rio T."/>
            <person name="Dalin E."/>
            <person name="Tice H."/>
            <person name="Bruce D."/>
            <person name="Goodwin L."/>
            <person name="Pitluck S."/>
            <person name="Kiss H."/>
            <person name="Brettin T."/>
            <person name="Detter J.C."/>
            <person name="Han C."/>
            <person name="Kuske C.R."/>
            <person name="Schmutz J."/>
            <person name="Larimer F."/>
            <person name="Land M."/>
            <person name="Hauser L."/>
            <person name="Kyrpides N."/>
            <person name="Mikhailova N."/>
            <person name="Ingram L."/>
            <person name="Richardson P."/>
        </authorList>
    </citation>
    <scope>NUCLEOTIDE SEQUENCE [LARGE SCALE GENOMIC DNA]</scope>
    <source>
        <strain>ATCC 8739 / DSM 1576 / NBRC 3972 / NCIMB 8545 / WDCM 00012 / Crooks</strain>
    </source>
</reference>
<name>RL29_ECOLC</name>
<dbReference type="EMBL" id="CP000946">
    <property type="protein sequence ID" value="ACA76079.1"/>
    <property type="molecule type" value="Genomic_DNA"/>
</dbReference>
<dbReference type="RefSeq" id="WP_000644741.1">
    <property type="nucleotide sequence ID" value="NZ_MTFT01000014.1"/>
</dbReference>
<dbReference type="SMR" id="B1IPY7"/>
<dbReference type="GeneID" id="93778675"/>
<dbReference type="KEGG" id="ecl:EcolC_0401"/>
<dbReference type="HOGENOM" id="CLU_158491_1_2_6"/>
<dbReference type="GO" id="GO:0022625">
    <property type="term" value="C:cytosolic large ribosomal subunit"/>
    <property type="evidence" value="ECO:0007669"/>
    <property type="project" value="TreeGrafter"/>
</dbReference>
<dbReference type="GO" id="GO:0003735">
    <property type="term" value="F:structural constituent of ribosome"/>
    <property type="evidence" value="ECO:0007669"/>
    <property type="project" value="InterPro"/>
</dbReference>
<dbReference type="GO" id="GO:0006412">
    <property type="term" value="P:translation"/>
    <property type="evidence" value="ECO:0007669"/>
    <property type="project" value="UniProtKB-UniRule"/>
</dbReference>
<dbReference type="CDD" id="cd00427">
    <property type="entry name" value="Ribosomal_L29_HIP"/>
    <property type="match status" value="1"/>
</dbReference>
<dbReference type="Gene3D" id="6.10.140.1970">
    <property type="match status" value="1"/>
</dbReference>
<dbReference type="HAMAP" id="MF_00374">
    <property type="entry name" value="Ribosomal_uL29"/>
    <property type="match status" value="1"/>
</dbReference>
<dbReference type="InterPro" id="IPR050063">
    <property type="entry name" value="Ribosomal_protein_uL29"/>
</dbReference>
<dbReference type="InterPro" id="IPR001854">
    <property type="entry name" value="Ribosomal_uL29"/>
</dbReference>
<dbReference type="InterPro" id="IPR018254">
    <property type="entry name" value="Ribosomal_uL29_CS"/>
</dbReference>
<dbReference type="InterPro" id="IPR036049">
    <property type="entry name" value="Ribosomal_uL29_sf"/>
</dbReference>
<dbReference type="NCBIfam" id="TIGR00012">
    <property type="entry name" value="L29"/>
    <property type="match status" value="1"/>
</dbReference>
<dbReference type="PANTHER" id="PTHR10916">
    <property type="entry name" value="60S RIBOSOMAL PROTEIN L35/50S RIBOSOMAL PROTEIN L29"/>
    <property type="match status" value="1"/>
</dbReference>
<dbReference type="PANTHER" id="PTHR10916:SF0">
    <property type="entry name" value="LARGE RIBOSOMAL SUBUNIT PROTEIN UL29C"/>
    <property type="match status" value="1"/>
</dbReference>
<dbReference type="Pfam" id="PF00831">
    <property type="entry name" value="Ribosomal_L29"/>
    <property type="match status" value="1"/>
</dbReference>
<dbReference type="SUPFAM" id="SSF46561">
    <property type="entry name" value="Ribosomal protein L29 (L29p)"/>
    <property type="match status" value="1"/>
</dbReference>
<dbReference type="PROSITE" id="PS00579">
    <property type="entry name" value="RIBOSOMAL_L29"/>
    <property type="match status" value="1"/>
</dbReference>
<evidence type="ECO:0000255" key="1">
    <source>
        <dbReference type="HAMAP-Rule" id="MF_00374"/>
    </source>
</evidence>
<evidence type="ECO:0000305" key="2"/>